<keyword id="KW-0963">Cytoplasm</keyword>
<keyword id="KW-0227">DNA damage</keyword>
<keyword id="KW-0233">DNA recombination</keyword>
<keyword id="KW-0234">DNA repair</keyword>
<keyword id="KW-0238">DNA-binding</keyword>
<reference key="1">
    <citation type="journal article" date="2008" name="PLoS ONE">
        <title>Genome sequence of Brucella abortus vaccine strain S19 compared to virulent strains yields candidate virulence genes.</title>
        <authorList>
            <person name="Crasta O.R."/>
            <person name="Folkerts O."/>
            <person name="Fei Z."/>
            <person name="Mane S.P."/>
            <person name="Evans C."/>
            <person name="Martino-Catt S."/>
            <person name="Bricker B."/>
            <person name="Yu G."/>
            <person name="Du L."/>
            <person name="Sobral B.W."/>
        </authorList>
    </citation>
    <scope>NUCLEOTIDE SEQUENCE [LARGE SCALE GENOMIC DNA]</scope>
    <source>
        <strain>S19</strain>
    </source>
</reference>
<sequence>MIGKLKGVIDEIAEDHAVIDVHGVGYVAFCSARTLGNLGGAGEAAILFIETYVREDMIRLYGFATQLEREWFRLLQNVQGVGAKVALAVLGTLSPSELANAIALRDIAMVSRAPGVGKKVAERIVTELKNKAPAFAGEASGTIGLKQELGAGAAPAPVADAVSALSNLGYSRDQAANAVAAALKETGEGADSAKLIRLGLKELSQ</sequence>
<gene>
    <name evidence="1" type="primary">ruvA</name>
    <name type="ordered locus">BAbS19_I16030</name>
</gene>
<comment type="function">
    <text evidence="1">The RuvA-RuvB-RuvC complex processes Holliday junction (HJ) DNA during genetic recombination and DNA repair, while the RuvA-RuvB complex plays an important role in the rescue of blocked DNA replication forks via replication fork reversal (RFR). RuvA specifically binds to HJ cruciform DNA, conferring on it an open structure. The RuvB hexamer acts as an ATP-dependent pump, pulling dsDNA into and through the RuvAB complex. HJ branch migration allows RuvC to scan DNA until it finds its consensus sequence, where it cleaves and resolves the cruciform DNA.</text>
</comment>
<comment type="subunit">
    <text evidence="1">Homotetramer. Forms an RuvA(8)-RuvB(12)-Holliday junction (HJ) complex. HJ DNA is sandwiched between 2 RuvA tetramers; dsDNA enters through RuvA and exits via RuvB. An RuvB hexamer assembles on each DNA strand where it exits the tetramer. Each RuvB hexamer is contacted by two RuvA subunits (via domain III) on 2 adjacent RuvB subunits; this complex drives branch migration. In the full resolvosome a probable DNA-RuvA(4)-RuvB(12)-RuvC(2) complex forms which resolves the HJ.</text>
</comment>
<comment type="subcellular location">
    <subcellularLocation>
        <location evidence="1">Cytoplasm</location>
    </subcellularLocation>
</comment>
<comment type="domain">
    <text evidence="1">Has three domains with a flexible linker between the domains II and III and assumes an 'L' shape. Domain III is highly mobile and contacts RuvB.</text>
</comment>
<comment type="similarity">
    <text evidence="1">Belongs to the RuvA family.</text>
</comment>
<organism>
    <name type="scientific">Brucella abortus (strain S19)</name>
    <dbReference type="NCBI Taxonomy" id="430066"/>
    <lineage>
        <taxon>Bacteria</taxon>
        <taxon>Pseudomonadati</taxon>
        <taxon>Pseudomonadota</taxon>
        <taxon>Alphaproteobacteria</taxon>
        <taxon>Hyphomicrobiales</taxon>
        <taxon>Brucellaceae</taxon>
        <taxon>Brucella/Ochrobactrum group</taxon>
        <taxon>Brucella</taxon>
    </lineage>
</organism>
<accession>B2S7E0</accession>
<dbReference type="EMBL" id="CP000887">
    <property type="protein sequence ID" value="ACD73087.1"/>
    <property type="molecule type" value="Genomic_DNA"/>
</dbReference>
<dbReference type="RefSeq" id="WP_002964792.1">
    <property type="nucleotide sequence ID" value="NC_010742.1"/>
</dbReference>
<dbReference type="SMR" id="B2S7E0"/>
<dbReference type="GeneID" id="97533143"/>
<dbReference type="KEGG" id="bmc:BAbS19_I16030"/>
<dbReference type="HOGENOM" id="CLU_087936_3_0_5"/>
<dbReference type="Proteomes" id="UP000002565">
    <property type="component" value="Chromosome 1"/>
</dbReference>
<dbReference type="GO" id="GO:0005737">
    <property type="term" value="C:cytoplasm"/>
    <property type="evidence" value="ECO:0007669"/>
    <property type="project" value="UniProtKB-SubCell"/>
</dbReference>
<dbReference type="GO" id="GO:0009379">
    <property type="term" value="C:Holliday junction helicase complex"/>
    <property type="evidence" value="ECO:0007669"/>
    <property type="project" value="InterPro"/>
</dbReference>
<dbReference type="GO" id="GO:0048476">
    <property type="term" value="C:Holliday junction resolvase complex"/>
    <property type="evidence" value="ECO:0007669"/>
    <property type="project" value="UniProtKB-UniRule"/>
</dbReference>
<dbReference type="GO" id="GO:0005524">
    <property type="term" value="F:ATP binding"/>
    <property type="evidence" value="ECO:0007669"/>
    <property type="project" value="InterPro"/>
</dbReference>
<dbReference type="GO" id="GO:0000400">
    <property type="term" value="F:four-way junction DNA binding"/>
    <property type="evidence" value="ECO:0007669"/>
    <property type="project" value="UniProtKB-UniRule"/>
</dbReference>
<dbReference type="GO" id="GO:0009378">
    <property type="term" value="F:four-way junction helicase activity"/>
    <property type="evidence" value="ECO:0007669"/>
    <property type="project" value="InterPro"/>
</dbReference>
<dbReference type="GO" id="GO:0006310">
    <property type="term" value="P:DNA recombination"/>
    <property type="evidence" value="ECO:0007669"/>
    <property type="project" value="UniProtKB-UniRule"/>
</dbReference>
<dbReference type="GO" id="GO:0006281">
    <property type="term" value="P:DNA repair"/>
    <property type="evidence" value="ECO:0007669"/>
    <property type="project" value="UniProtKB-UniRule"/>
</dbReference>
<dbReference type="Gene3D" id="1.10.150.20">
    <property type="entry name" value="5' to 3' exonuclease, C-terminal subdomain"/>
    <property type="match status" value="1"/>
</dbReference>
<dbReference type="Gene3D" id="1.10.8.10">
    <property type="entry name" value="DNA helicase RuvA subunit, C-terminal domain"/>
    <property type="match status" value="1"/>
</dbReference>
<dbReference type="Gene3D" id="2.40.50.140">
    <property type="entry name" value="Nucleic acid-binding proteins"/>
    <property type="match status" value="1"/>
</dbReference>
<dbReference type="HAMAP" id="MF_00031">
    <property type="entry name" value="DNA_HJ_migration_RuvA"/>
    <property type="match status" value="1"/>
</dbReference>
<dbReference type="InterPro" id="IPR013849">
    <property type="entry name" value="DNA_helicase_Holl-junc_RuvA_I"/>
</dbReference>
<dbReference type="InterPro" id="IPR003583">
    <property type="entry name" value="Hlx-hairpin-Hlx_DNA-bd_motif"/>
</dbReference>
<dbReference type="InterPro" id="IPR012340">
    <property type="entry name" value="NA-bd_OB-fold"/>
</dbReference>
<dbReference type="InterPro" id="IPR000085">
    <property type="entry name" value="RuvA"/>
</dbReference>
<dbReference type="InterPro" id="IPR010994">
    <property type="entry name" value="RuvA_2-like"/>
</dbReference>
<dbReference type="InterPro" id="IPR011114">
    <property type="entry name" value="RuvA_C"/>
</dbReference>
<dbReference type="InterPro" id="IPR036267">
    <property type="entry name" value="RuvA_C_sf"/>
</dbReference>
<dbReference type="NCBIfam" id="TIGR00084">
    <property type="entry name" value="ruvA"/>
    <property type="match status" value="1"/>
</dbReference>
<dbReference type="Pfam" id="PF14520">
    <property type="entry name" value="HHH_5"/>
    <property type="match status" value="1"/>
</dbReference>
<dbReference type="Pfam" id="PF07499">
    <property type="entry name" value="RuvA_C"/>
    <property type="match status" value="1"/>
</dbReference>
<dbReference type="Pfam" id="PF01330">
    <property type="entry name" value="RuvA_N"/>
    <property type="match status" value="1"/>
</dbReference>
<dbReference type="SMART" id="SM00278">
    <property type="entry name" value="HhH1"/>
    <property type="match status" value="2"/>
</dbReference>
<dbReference type="SUPFAM" id="SSF46929">
    <property type="entry name" value="DNA helicase RuvA subunit, C-terminal domain"/>
    <property type="match status" value="1"/>
</dbReference>
<dbReference type="SUPFAM" id="SSF50249">
    <property type="entry name" value="Nucleic acid-binding proteins"/>
    <property type="match status" value="1"/>
</dbReference>
<dbReference type="SUPFAM" id="SSF47781">
    <property type="entry name" value="RuvA domain 2-like"/>
    <property type="match status" value="1"/>
</dbReference>
<feature type="chain" id="PRO_1000090288" description="Holliday junction branch migration complex subunit RuvA">
    <location>
        <begin position="1"/>
        <end position="205"/>
    </location>
</feature>
<feature type="region of interest" description="Domain I" evidence="1">
    <location>
        <begin position="1"/>
        <end position="64"/>
    </location>
</feature>
<feature type="region of interest" description="Domain II" evidence="1">
    <location>
        <begin position="65"/>
        <end position="143"/>
    </location>
</feature>
<feature type="region of interest" description="Flexible linker" evidence="1">
    <location>
        <begin position="144"/>
        <end position="152"/>
    </location>
</feature>
<feature type="region of interest" description="Domain III" evidence="1">
    <location>
        <begin position="153"/>
        <end position="205"/>
    </location>
</feature>
<name>RUVA_BRUA1</name>
<proteinExistence type="inferred from homology"/>
<evidence type="ECO:0000255" key="1">
    <source>
        <dbReference type="HAMAP-Rule" id="MF_00031"/>
    </source>
</evidence>
<protein>
    <recommendedName>
        <fullName evidence="1">Holliday junction branch migration complex subunit RuvA</fullName>
    </recommendedName>
</protein>